<proteinExistence type="evidence at transcript level"/>
<sequence length="565" mass="63251">MWRLRLLVLAVLAAGSAEAQANSSDGFLEFSVGKFTYFVLSKSSPQEAVLRHISSNVTFLLFQIHSQYQNTTVSFTKTLLPSTSGTGNDRGLVFILRPEQAVCTWYLETGDTKPVQSVALTLSYSERDPIPGGCNLEFDLDIDPNLYLDYNFFETTIKFAPANIGYARATEPPPCDVSTSRESRWRLRYDVYQYFLPEGDLTEASLLHHLQRMAQVAQVKASAIKVATLTADDKTAVSFSSLPGQGVIYNVIVWDPSLNTSAAYVPVHTYACSFESVDGNCASPGRVSTKVFSTLFALLGLFVCFFGHRFWKTDLFFVGFIFLGFFFYILITRLTPLQYDVRLALTAVAGSFGGLLLVASWWRFGILTLCMLCVGLVLGFLVSSGTFFTPLGNLNVFHDDGVFWVTFSCIALLVPVIFMGCLRILNILACGVVGSYSVVLAVNSYMFTSLSYITLNVLRRALNTDFRGAFIRVPFQTNDYIILAVWGMLAVSGITLQIRRERGQPPFPPHPYKLWKQERERRVTNILDPSHHIPPLRERLYGRVARIKELFQKEQPAGERTPLLL</sequence>
<name>TM7S3_MOUSE</name>
<accession>Q9CRG1</accession>
<accession>Q3TBQ2</accession>
<accession>Q3U3Q6</accession>
<accession>Q4F873</accession>
<accession>Q6PES5</accession>
<protein>
    <recommendedName>
        <fullName>Transmembrane 7 superfamily member 3</fullName>
    </recommendedName>
    <alternativeName>
        <fullName>NARP1</fullName>
    </alternativeName>
</protein>
<dbReference type="EMBL" id="DQ104329">
    <property type="protein sequence ID" value="AAZ14855.1"/>
    <property type="molecule type" value="mRNA"/>
</dbReference>
<dbReference type="EMBL" id="AK010720">
    <property type="protein sequence ID" value="BAB27141.1"/>
    <property type="molecule type" value="mRNA"/>
</dbReference>
<dbReference type="EMBL" id="AK154633">
    <property type="protein sequence ID" value="BAE32729.1"/>
    <property type="molecule type" value="mRNA"/>
</dbReference>
<dbReference type="EMBL" id="AK171111">
    <property type="protein sequence ID" value="BAE42255.1"/>
    <property type="molecule type" value="mRNA"/>
</dbReference>
<dbReference type="EMBL" id="BC057900">
    <property type="protein sequence ID" value="AAH57900.1"/>
    <property type="molecule type" value="mRNA"/>
</dbReference>
<dbReference type="CCDS" id="CCDS20699.1"/>
<dbReference type="RefSeq" id="NP_080557.2">
    <property type="nucleotide sequence ID" value="NM_026281.2"/>
</dbReference>
<dbReference type="SMR" id="Q9CRG1"/>
<dbReference type="BioGRID" id="212318">
    <property type="interactions" value="1"/>
</dbReference>
<dbReference type="FunCoup" id="Q9CRG1">
    <property type="interactions" value="774"/>
</dbReference>
<dbReference type="IntAct" id="Q9CRG1">
    <property type="interactions" value="1"/>
</dbReference>
<dbReference type="MINT" id="Q9CRG1"/>
<dbReference type="STRING" id="10090.ENSMUSP00000045650"/>
<dbReference type="GlyCosmos" id="Q9CRG1">
    <property type="glycosylation" value="4 sites, No reported glycans"/>
</dbReference>
<dbReference type="GlyGen" id="Q9CRG1">
    <property type="glycosylation" value="4 sites"/>
</dbReference>
<dbReference type="iPTMnet" id="Q9CRG1"/>
<dbReference type="PhosphoSitePlus" id="Q9CRG1"/>
<dbReference type="PaxDb" id="10090-ENSMUSP00000045650"/>
<dbReference type="PeptideAtlas" id="Q9CRG1"/>
<dbReference type="ProteomicsDB" id="259232"/>
<dbReference type="Pumba" id="Q9CRG1"/>
<dbReference type="DNASU" id="67623"/>
<dbReference type="GeneID" id="67623"/>
<dbReference type="KEGG" id="mmu:67623"/>
<dbReference type="UCSC" id="uc009ese.1">
    <property type="organism name" value="mouse"/>
</dbReference>
<dbReference type="AGR" id="MGI:1914873"/>
<dbReference type="CTD" id="51768"/>
<dbReference type="MGI" id="MGI:1914873">
    <property type="gene designation" value="Tm7sf3"/>
</dbReference>
<dbReference type="eggNOG" id="ENOG502QS07">
    <property type="taxonomic scope" value="Eukaryota"/>
</dbReference>
<dbReference type="InParanoid" id="Q9CRG1"/>
<dbReference type="OrthoDB" id="5967337at2759"/>
<dbReference type="PhylomeDB" id="Q9CRG1"/>
<dbReference type="TreeFam" id="TF332291"/>
<dbReference type="BioGRID-ORCS" id="67623">
    <property type="hits" value="5 hits in 78 CRISPR screens"/>
</dbReference>
<dbReference type="PRO" id="PR:Q9CRG1"/>
<dbReference type="Proteomes" id="UP000000589">
    <property type="component" value="Unplaced"/>
</dbReference>
<dbReference type="RNAct" id="Q9CRG1">
    <property type="molecule type" value="protein"/>
</dbReference>
<dbReference type="GO" id="GO:0005886">
    <property type="term" value="C:plasma membrane"/>
    <property type="evidence" value="ECO:0000250"/>
    <property type="project" value="UniProtKB"/>
</dbReference>
<dbReference type="GO" id="GO:0034620">
    <property type="term" value="P:cellular response to unfolded protein"/>
    <property type="evidence" value="ECO:0000315"/>
    <property type="project" value="UniProtKB"/>
</dbReference>
<dbReference type="GO" id="GO:0043069">
    <property type="term" value="P:negative regulation of programmed cell death"/>
    <property type="evidence" value="ECO:0000315"/>
    <property type="project" value="UniProtKB"/>
</dbReference>
<dbReference type="GO" id="GO:0032024">
    <property type="term" value="P:positive regulation of insulin secretion"/>
    <property type="evidence" value="ECO:0000250"/>
    <property type="project" value="UniProtKB"/>
</dbReference>
<dbReference type="InterPro" id="IPR025256">
    <property type="entry name" value="TM7S3/TM198-like_dom"/>
</dbReference>
<dbReference type="InterPro" id="IPR042502">
    <property type="entry name" value="TM7SF3"/>
</dbReference>
<dbReference type="PANTHER" id="PTHR15937">
    <property type="entry name" value="TRANSMEMBRANE 7 SUPERFAMILY MEMBER 3"/>
    <property type="match status" value="1"/>
</dbReference>
<dbReference type="PANTHER" id="PTHR15937:SF3">
    <property type="entry name" value="TRANSMEMBRANE 7 SUPERFAMILY MEMBER 3"/>
    <property type="match status" value="1"/>
</dbReference>
<dbReference type="Pfam" id="PF13886">
    <property type="entry name" value="TM7S3_TM198"/>
    <property type="match status" value="1"/>
</dbReference>
<reference key="1">
    <citation type="submission" date="2005-06" db="EMBL/GenBank/DDBJ databases">
        <title>Cloning and characterization of a 7-transmembrane protein NARP in the nucleus.</title>
        <authorList>
            <person name="Chang N.-S."/>
        </authorList>
    </citation>
    <scope>NUCLEOTIDE SEQUENCE [MRNA]</scope>
    <source>
        <strain>C3H/An</strain>
    </source>
</reference>
<reference key="2">
    <citation type="journal article" date="2005" name="Science">
        <title>The transcriptional landscape of the mammalian genome.</title>
        <authorList>
            <person name="Carninci P."/>
            <person name="Kasukawa T."/>
            <person name="Katayama S."/>
            <person name="Gough J."/>
            <person name="Frith M.C."/>
            <person name="Maeda N."/>
            <person name="Oyama R."/>
            <person name="Ravasi T."/>
            <person name="Lenhard B."/>
            <person name="Wells C."/>
            <person name="Kodzius R."/>
            <person name="Shimokawa K."/>
            <person name="Bajic V.B."/>
            <person name="Brenner S.E."/>
            <person name="Batalov S."/>
            <person name="Forrest A.R."/>
            <person name="Zavolan M."/>
            <person name="Davis M.J."/>
            <person name="Wilming L.G."/>
            <person name="Aidinis V."/>
            <person name="Allen J.E."/>
            <person name="Ambesi-Impiombato A."/>
            <person name="Apweiler R."/>
            <person name="Aturaliya R.N."/>
            <person name="Bailey T.L."/>
            <person name="Bansal M."/>
            <person name="Baxter L."/>
            <person name="Beisel K.W."/>
            <person name="Bersano T."/>
            <person name="Bono H."/>
            <person name="Chalk A.M."/>
            <person name="Chiu K.P."/>
            <person name="Choudhary V."/>
            <person name="Christoffels A."/>
            <person name="Clutterbuck D.R."/>
            <person name="Crowe M.L."/>
            <person name="Dalla E."/>
            <person name="Dalrymple B.P."/>
            <person name="de Bono B."/>
            <person name="Della Gatta G."/>
            <person name="di Bernardo D."/>
            <person name="Down T."/>
            <person name="Engstrom P."/>
            <person name="Fagiolini M."/>
            <person name="Faulkner G."/>
            <person name="Fletcher C.F."/>
            <person name="Fukushima T."/>
            <person name="Furuno M."/>
            <person name="Futaki S."/>
            <person name="Gariboldi M."/>
            <person name="Georgii-Hemming P."/>
            <person name="Gingeras T.R."/>
            <person name="Gojobori T."/>
            <person name="Green R.E."/>
            <person name="Gustincich S."/>
            <person name="Harbers M."/>
            <person name="Hayashi Y."/>
            <person name="Hensch T.K."/>
            <person name="Hirokawa N."/>
            <person name="Hill D."/>
            <person name="Huminiecki L."/>
            <person name="Iacono M."/>
            <person name="Ikeo K."/>
            <person name="Iwama A."/>
            <person name="Ishikawa T."/>
            <person name="Jakt M."/>
            <person name="Kanapin A."/>
            <person name="Katoh M."/>
            <person name="Kawasawa Y."/>
            <person name="Kelso J."/>
            <person name="Kitamura H."/>
            <person name="Kitano H."/>
            <person name="Kollias G."/>
            <person name="Krishnan S.P."/>
            <person name="Kruger A."/>
            <person name="Kummerfeld S.K."/>
            <person name="Kurochkin I.V."/>
            <person name="Lareau L.F."/>
            <person name="Lazarevic D."/>
            <person name="Lipovich L."/>
            <person name="Liu J."/>
            <person name="Liuni S."/>
            <person name="McWilliam S."/>
            <person name="Madan Babu M."/>
            <person name="Madera M."/>
            <person name="Marchionni L."/>
            <person name="Matsuda H."/>
            <person name="Matsuzawa S."/>
            <person name="Miki H."/>
            <person name="Mignone F."/>
            <person name="Miyake S."/>
            <person name="Morris K."/>
            <person name="Mottagui-Tabar S."/>
            <person name="Mulder N."/>
            <person name="Nakano N."/>
            <person name="Nakauchi H."/>
            <person name="Ng P."/>
            <person name="Nilsson R."/>
            <person name="Nishiguchi S."/>
            <person name="Nishikawa S."/>
            <person name="Nori F."/>
            <person name="Ohara O."/>
            <person name="Okazaki Y."/>
            <person name="Orlando V."/>
            <person name="Pang K.C."/>
            <person name="Pavan W.J."/>
            <person name="Pavesi G."/>
            <person name="Pesole G."/>
            <person name="Petrovsky N."/>
            <person name="Piazza S."/>
            <person name="Reed J."/>
            <person name="Reid J.F."/>
            <person name="Ring B.Z."/>
            <person name="Ringwald M."/>
            <person name="Rost B."/>
            <person name="Ruan Y."/>
            <person name="Salzberg S.L."/>
            <person name="Sandelin A."/>
            <person name="Schneider C."/>
            <person name="Schoenbach C."/>
            <person name="Sekiguchi K."/>
            <person name="Semple C.A."/>
            <person name="Seno S."/>
            <person name="Sessa L."/>
            <person name="Sheng Y."/>
            <person name="Shibata Y."/>
            <person name="Shimada H."/>
            <person name="Shimada K."/>
            <person name="Silva D."/>
            <person name="Sinclair B."/>
            <person name="Sperling S."/>
            <person name="Stupka E."/>
            <person name="Sugiura K."/>
            <person name="Sultana R."/>
            <person name="Takenaka Y."/>
            <person name="Taki K."/>
            <person name="Tammoja K."/>
            <person name="Tan S.L."/>
            <person name="Tang S."/>
            <person name="Taylor M.S."/>
            <person name="Tegner J."/>
            <person name="Teichmann S.A."/>
            <person name="Ueda H.R."/>
            <person name="van Nimwegen E."/>
            <person name="Verardo R."/>
            <person name="Wei C.L."/>
            <person name="Yagi K."/>
            <person name="Yamanishi H."/>
            <person name="Zabarovsky E."/>
            <person name="Zhu S."/>
            <person name="Zimmer A."/>
            <person name="Hide W."/>
            <person name="Bult C."/>
            <person name="Grimmond S.M."/>
            <person name="Teasdale R.D."/>
            <person name="Liu E.T."/>
            <person name="Brusic V."/>
            <person name="Quackenbush J."/>
            <person name="Wahlestedt C."/>
            <person name="Mattick J.S."/>
            <person name="Hume D.A."/>
            <person name="Kai C."/>
            <person name="Sasaki D."/>
            <person name="Tomaru Y."/>
            <person name="Fukuda S."/>
            <person name="Kanamori-Katayama M."/>
            <person name="Suzuki M."/>
            <person name="Aoki J."/>
            <person name="Arakawa T."/>
            <person name="Iida J."/>
            <person name="Imamura K."/>
            <person name="Itoh M."/>
            <person name="Kato T."/>
            <person name="Kawaji H."/>
            <person name="Kawagashira N."/>
            <person name="Kawashima T."/>
            <person name="Kojima M."/>
            <person name="Kondo S."/>
            <person name="Konno H."/>
            <person name="Nakano K."/>
            <person name="Ninomiya N."/>
            <person name="Nishio T."/>
            <person name="Okada M."/>
            <person name="Plessy C."/>
            <person name="Shibata K."/>
            <person name="Shiraki T."/>
            <person name="Suzuki S."/>
            <person name="Tagami M."/>
            <person name="Waki K."/>
            <person name="Watahiki A."/>
            <person name="Okamura-Oho Y."/>
            <person name="Suzuki H."/>
            <person name="Kawai J."/>
            <person name="Hayashizaki Y."/>
        </authorList>
    </citation>
    <scope>NUCLEOTIDE SEQUENCE [LARGE SCALE MRNA]</scope>
    <source>
        <strain>C57BL/6J</strain>
        <strain>NOD</strain>
        <tissue>Embryonic stem cell</tissue>
    </source>
</reference>
<reference key="3">
    <citation type="journal article" date="2004" name="Genome Res.">
        <title>The status, quality, and expansion of the NIH full-length cDNA project: the Mammalian Gene Collection (MGC).</title>
        <authorList>
            <consortium name="The MGC Project Team"/>
        </authorList>
    </citation>
    <scope>NUCLEOTIDE SEQUENCE [LARGE SCALE MRNA] OF 257-565</scope>
    <source>
        <strain>FVB/N</strain>
        <tissue>Mammary tumor</tissue>
    </source>
</reference>
<reference key="4">
    <citation type="journal article" date="2011" name="Diabetologia">
        <title>An siRNA screen identifies transmembrane 7 superfamily member 3 (TM7SF3), a seven transmembrane orphan receptor, as an inhibitor of cytokine-induced death of pancreatic beta cells.</title>
        <authorList>
            <person name="Beck A."/>
            <person name="Isaac R."/>
            <person name="Lavelin I."/>
            <person name="Hart Y."/>
            <person name="Volberg T."/>
            <person name="Shatz-Azoulay H."/>
            <person name="Geiger B."/>
            <person name="Zick Y."/>
        </authorList>
    </citation>
    <scope>FUNCTION</scope>
</reference>
<reference key="5">
    <citation type="journal article" date="2017" name="Cell Death Differ.">
        <title>TM7SF3, a novel p53-regulated homeostatic factor, attenuates cellular stress and the subsequent induction of the unfolded protein response.</title>
        <authorList>
            <person name="Isaac R."/>
            <person name="Goldstein I."/>
            <person name="Furth N."/>
            <person name="Zilber N."/>
            <person name="Streim S."/>
            <person name="Boura-Halfon S."/>
            <person name="Elhanany E."/>
            <person name="Rotter V."/>
            <person name="Oren M."/>
            <person name="Zick Y."/>
        </authorList>
    </citation>
    <scope>FUNCTION</scope>
</reference>
<keyword id="KW-1003">Cell membrane</keyword>
<keyword id="KW-0325">Glycoprotein</keyword>
<keyword id="KW-0472">Membrane</keyword>
<keyword id="KW-1185">Reference proteome</keyword>
<keyword id="KW-0732">Signal</keyword>
<keyword id="KW-0346">Stress response</keyword>
<keyword id="KW-0812">Transmembrane</keyword>
<keyword id="KW-1133">Transmembrane helix</keyword>
<feature type="signal peptide" evidence="2">
    <location>
        <begin position="1"/>
        <end position="21"/>
    </location>
</feature>
<feature type="chain" id="PRO_0000022538" description="Transmembrane 7 superfamily member 3">
    <location>
        <begin position="22"/>
        <end position="565"/>
    </location>
</feature>
<feature type="transmembrane region" description="Helical" evidence="2">
    <location>
        <begin position="287"/>
        <end position="307"/>
    </location>
</feature>
<feature type="transmembrane region" description="Helical" evidence="2">
    <location>
        <begin position="315"/>
        <end position="335"/>
    </location>
</feature>
<feature type="transmembrane region" description="Helical" evidence="2">
    <location>
        <begin position="341"/>
        <end position="361"/>
    </location>
</feature>
<feature type="transmembrane region" description="Helical" evidence="2">
    <location>
        <begin position="364"/>
        <end position="384"/>
    </location>
</feature>
<feature type="transmembrane region" description="Helical" evidence="2">
    <location>
        <begin position="402"/>
        <end position="422"/>
    </location>
</feature>
<feature type="transmembrane region" description="Helical" evidence="2">
    <location>
        <begin position="427"/>
        <end position="447"/>
    </location>
</feature>
<feature type="transmembrane region" description="Helical" evidence="2">
    <location>
        <begin position="478"/>
        <end position="498"/>
    </location>
</feature>
<feature type="glycosylation site" description="N-linked (GlcNAc...) asparagine" evidence="2">
    <location>
        <position position="22"/>
    </location>
</feature>
<feature type="glycosylation site" description="N-linked (GlcNAc...) asparagine" evidence="2">
    <location>
        <position position="56"/>
    </location>
</feature>
<feature type="glycosylation site" description="N-linked (GlcNAc...) asparagine" evidence="2">
    <location>
        <position position="70"/>
    </location>
</feature>
<feature type="glycosylation site" description="N-linked (GlcNAc...) asparagine" evidence="2">
    <location>
        <position position="259"/>
    </location>
</feature>
<feature type="sequence conflict" description="In Ref. 1; AAZ14855 and 2; BAE42255." evidence="5" ref="1 2">
    <original>T</original>
    <variation>A</variation>
    <location>
        <position position="170"/>
    </location>
</feature>
<feature type="sequence conflict" description="In Ref. 2; BAB27141/BAE32729." evidence="5" ref="2">
    <original>S</original>
    <variation>F</variation>
    <location>
        <position position="283"/>
    </location>
</feature>
<feature type="sequence conflict" description="In Ref. 2; BAB27141/BAE32729." evidence="5" ref="2">
    <original>F</original>
    <variation>V</variation>
    <location>
        <position position="296"/>
    </location>
</feature>
<feature type="sequence conflict" description="In Ref. 2; BAB27141/BAE32729." evidence="5" ref="2">
    <original>V</original>
    <variation>I</variation>
    <location>
        <position position="318"/>
    </location>
</feature>
<feature type="sequence conflict" description="In Ref. 2; BAE42255." evidence="5" ref="2">
    <original>Q</original>
    <variation>K</variation>
    <location>
        <position position="338"/>
    </location>
</feature>
<feature type="sequence conflict" description="In Ref. 2; BAB27141/BAE32729." evidence="5" ref="2">
    <original>F</original>
    <variation>V</variation>
    <location>
        <position position="470"/>
    </location>
</feature>
<evidence type="ECO:0000250" key="1">
    <source>
        <dbReference type="UniProtKB" id="Q9NS93"/>
    </source>
</evidence>
<evidence type="ECO:0000255" key="2"/>
<evidence type="ECO:0000269" key="3">
    <source>
    </source>
</evidence>
<evidence type="ECO:0000269" key="4">
    <source>
    </source>
</evidence>
<evidence type="ECO:0000305" key="5"/>
<organism>
    <name type="scientific">Mus musculus</name>
    <name type="common">Mouse</name>
    <dbReference type="NCBI Taxonomy" id="10090"/>
    <lineage>
        <taxon>Eukaryota</taxon>
        <taxon>Metazoa</taxon>
        <taxon>Chordata</taxon>
        <taxon>Craniata</taxon>
        <taxon>Vertebrata</taxon>
        <taxon>Euteleostomi</taxon>
        <taxon>Mammalia</taxon>
        <taxon>Eutheria</taxon>
        <taxon>Euarchontoglires</taxon>
        <taxon>Glires</taxon>
        <taxon>Rodentia</taxon>
        <taxon>Myomorpha</taxon>
        <taxon>Muroidea</taxon>
        <taxon>Muridae</taxon>
        <taxon>Murinae</taxon>
        <taxon>Mus</taxon>
        <taxon>Mus</taxon>
    </lineage>
</organism>
<gene>
    <name type="primary">Tm7sf3</name>
</gene>
<comment type="function">
    <text evidence="1 3 4">Involved in the inhibition of cytokine-induced death of pancreatic beta cells (PubMed:21853325). Involved in the promotion of insulin secretion from pancreatic beta cells (By similarity). Is a downstream transcriptional target of p53/TP53, and acts as a pro-survival homeostatic factor that attenuates the development of cellular stress. Maintains protein homeostasis and promotes cell survival through attenuation of endoplasmic reticulum (ER) stress and the subsequent induction of unfolded protein response (UPR) (PubMed:27740623).</text>
</comment>
<comment type="subcellular location">
    <subcellularLocation>
        <location evidence="1">Cell membrane</location>
        <topology evidence="2">Multi-pass membrane protein</topology>
    </subcellularLocation>
</comment>